<dbReference type="EMBL" id="AY442330">
    <property type="protein sequence ID" value="AAS01603.1"/>
    <property type="molecule type" value="mRNA"/>
</dbReference>
<dbReference type="EMBL" id="AY442331">
    <property type="protein sequence ID" value="AAS01604.1"/>
    <property type="molecule type" value="mRNA"/>
</dbReference>
<dbReference type="EMBL" id="CR749381">
    <property type="protein sequence ID" value="CAH18233.1"/>
    <property type="molecule type" value="mRNA"/>
</dbReference>
<dbReference type="EMBL" id="CR936599">
    <property type="protein sequence ID" value="CAI56747.1"/>
    <property type="molecule type" value="mRNA"/>
</dbReference>
<dbReference type="EMBL" id="AC008813">
    <property type="status" value="NOT_ANNOTATED_CDS"/>
    <property type="molecule type" value="Genomic_DNA"/>
</dbReference>
<dbReference type="EMBL" id="CH471135">
    <property type="protein sequence ID" value="EAW72100.1"/>
    <property type="molecule type" value="Genomic_DNA"/>
</dbReference>
<dbReference type="CCDS" id="CCDS33094.1">
    <molecule id="Q5VIY5-1"/>
</dbReference>
<dbReference type="RefSeq" id="NP_001008801.1">
    <molecule id="Q5VIY5-1"/>
    <property type="nucleotide sequence ID" value="NM_001008801.2"/>
</dbReference>
<dbReference type="RefSeq" id="NP_001264049.1">
    <property type="nucleotide sequence ID" value="NM_001277120.1"/>
</dbReference>
<dbReference type="RefSeq" id="XP_016882933.1">
    <property type="nucleotide sequence ID" value="XM_017027444.1"/>
</dbReference>
<dbReference type="SMR" id="Q5VIY5"/>
<dbReference type="BioGRID" id="124696">
    <property type="interactions" value="6"/>
</dbReference>
<dbReference type="FunCoup" id="Q5VIY5">
    <property type="interactions" value="4"/>
</dbReference>
<dbReference type="IntAct" id="Q5VIY5">
    <property type="interactions" value="5"/>
</dbReference>
<dbReference type="STRING" id="9606.ENSP00000470381"/>
<dbReference type="GlyGen" id="Q5VIY5">
    <property type="glycosylation" value="1 site, 1 O-linked glycan (1 site)"/>
</dbReference>
<dbReference type="iPTMnet" id="Q5VIY5"/>
<dbReference type="PhosphoSitePlus" id="Q5VIY5"/>
<dbReference type="BioMuta" id="ZNF468"/>
<dbReference type="DMDM" id="74756746"/>
<dbReference type="jPOST" id="Q5VIY5"/>
<dbReference type="MassIVE" id="Q5VIY5"/>
<dbReference type="PaxDb" id="9606-ENSP00000470381"/>
<dbReference type="PeptideAtlas" id="Q5VIY5"/>
<dbReference type="ProteomicsDB" id="65255">
    <molecule id="Q5VIY5-1"/>
</dbReference>
<dbReference type="ProteomicsDB" id="65256">
    <molecule id="Q5VIY5-2"/>
</dbReference>
<dbReference type="TopDownProteomics" id="Q5VIY5-2">
    <molecule id="Q5VIY5-2"/>
</dbReference>
<dbReference type="Antibodypedia" id="32625">
    <property type="antibodies" value="32 antibodies from 10 providers"/>
</dbReference>
<dbReference type="DNASU" id="90333"/>
<dbReference type="Ensembl" id="ENST00000595646.6">
    <molecule id="Q5VIY5-1"/>
    <property type="protein sequence ID" value="ENSP00000470381.1"/>
    <property type="gene ID" value="ENSG00000204604.13"/>
</dbReference>
<dbReference type="GeneID" id="90333"/>
<dbReference type="KEGG" id="hsa:90333"/>
<dbReference type="MANE-Select" id="ENST00000595646.6">
    <property type="protein sequence ID" value="ENSP00000470381.1"/>
    <property type="RefSeq nucleotide sequence ID" value="NM_001008801.2"/>
    <property type="RefSeq protein sequence ID" value="NP_001008801.1"/>
</dbReference>
<dbReference type="UCSC" id="uc002qaf.4">
    <molecule id="Q5VIY5-1"/>
    <property type="organism name" value="human"/>
</dbReference>
<dbReference type="AGR" id="HGNC:33105"/>
<dbReference type="CTD" id="90333"/>
<dbReference type="GeneCards" id="ZNF468"/>
<dbReference type="HGNC" id="HGNC:33105">
    <property type="gene designation" value="ZNF468"/>
</dbReference>
<dbReference type="HPA" id="ENSG00000204604">
    <property type="expression patterns" value="Low tissue specificity"/>
</dbReference>
<dbReference type="MIM" id="616841">
    <property type="type" value="gene"/>
</dbReference>
<dbReference type="neXtProt" id="NX_Q5VIY5"/>
<dbReference type="OpenTargets" id="ENSG00000204604"/>
<dbReference type="PharmGKB" id="PA162410166"/>
<dbReference type="VEuPathDB" id="HostDB:ENSG00000204604"/>
<dbReference type="eggNOG" id="KOG1721">
    <property type="taxonomic scope" value="Eukaryota"/>
</dbReference>
<dbReference type="GeneTree" id="ENSGT00940000154397"/>
<dbReference type="HOGENOM" id="CLU_002678_44_5_1"/>
<dbReference type="InParanoid" id="Q5VIY5"/>
<dbReference type="OMA" id="EFCLHEI"/>
<dbReference type="OrthoDB" id="1095242at2759"/>
<dbReference type="PAN-GO" id="Q5VIY5">
    <property type="GO annotations" value="4 GO annotations based on evolutionary models"/>
</dbReference>
<dbReference type="PhylomeDB" id="Q5VIY5"/>
<dbReference type="TreeFam" id="TF341892"/>
<dbReference type="PathwayCommons" id="Q5VIY5"/>
<dbReference type="Reactome" id="R-HSA-212436">
    <property type="pathway name" value="Generic Transcription Pathway"/>
</dbReference>
<dbReference type="SignaLink" id="Q5VIY5"/>
<dbReference type="BioGRID-ORCS" id="90333">
    <property type="hits" value="303 hits in 1140 CRISPR screens"/>
</dbReference>
<dbReference type="ChiTaRS" id="ZNF468">
    <property type="organism name" value="human"/>
</dbReference>
<dbReference type="GenomeRNAi" id="90333"/>
<dbReference type="Pharos" id="Q5VIY5">
    <property type="development level" value="Tdark"/>
</dbReference>
<dbReference type="PRO" id="PR:Q5VIY5"/>
<dbReference type="Proteomes" id="UP000005640">
    <property type="component" value="Chromosome 19"/>
</dbReference>
<dbReference type="RNAct" id="Q5VIY5">
    <property type="molecule type" value="protein"/>
</dbReference>
<dbReference type="Bgee" id="ENSG00000204604">
    <property type="expression patterns" value="Expressed in palpebral conjunctiva and 149 other cell types or tissues"/>
</dbReference>
<dbReference type="ExpressionAtlas" id="Q5VIY5">
    <property type="expression patterns" value="baseline and differential"/>
</dbReference>
<dbReference type="GO" id="GO:0005634">
    <property type="term" value="C:nucleus"/>
    <property type="evidence" value="ECO:0000318"/>
    <property type="project" value="GO_Central"/>
</dbReference>
<dbReference type="GO" id="GO:0000981">
    <property type="term" value="F:DNA-binding transcription factor activity, RNA polymerase II-specific"/>
    <property type="evidence" value="ECO:0000318"/>
    <property type="project" value="GO_Central"/>
</dbReference>
<dbReference type="GO" id="GO:0000978">
    <property type="term" value="F:RNA polymerase II cis-regulatory region sequence-specific DNA binding"/>
    <property type="evidence" value="ECO:0000318"/>
    <property type="project" value="GO_Central"/>
</dbReference>
<dbReference type="GO" id="GO:0008270">
    <property type="term" value="F:zinc ion binding"/>
    <property type="evidence" value="ECO:0007669"/>
    <property type="project" value="UniProtKB-KW"/>
</dbReference>
<dbReference type="GO" id="GO:0006357">
    <property type="term" value="P:regulation of transcription by RNA polymerase II"/>
    <property type="evidence" value="ECO:0000318"/>
    <property type="project" value="GO_Central"/>
</dbReference>
<dbReference type="CDD" id="cd07765">
    <property type="entry name" value="KRAB_A-box"/>
    <property type="match status" value="1"/>
</dbReference>
<dbReference type="FunFam" id="3.30.160.60:FF:000744">
    <property type="entry name" value="zinc finger E-box-binding homeobox 1"/>
    <property type="match status" value="1"/>
</dbReference>
<dbReference type="FunFam" id="3.30.160.60:FF:000745">
    <property type="entry name" value="zinc finger protein 181 isoform X1"/>
    <property type="match status" value="1"/>
</dbReference>
<dbReference type="FunFam" id="3.30.160.60:FF:000622">
    <property type="entry name" value="zinc finger protein 26 isoform X3"/>
    <property type="match status" value="1"/>
</dbReference>
<dbReference type="FunFam" id="3.30.160.60:FF:000992">
    <property type="entry name" value="Zinc finger protein 320"/>
    <property type="match status" value="1"/>
</dbReference>
<dbReference type="FunFam" id="3.30.160.60:FF:000016">
    <property type="entry name" value="zinc finger protein 37 homolog"/>
    <property type="match status" value="1"/>
</dbReference>
<dbReference type="FunFam" id="3.30.160.60:FF:001865">
    <property type="entry name" value="Zinc finger protein 404"/>
    <property type="match status" value="1"/>
</dbReference>
<dbReference type="FunFam" id="3.30.160.60:FF:002462">
    <property type="entry name" value="Zinc finger protein 611"/>
    <property type="match status" value="1"/>
</dbReference>
<dbReference type="FunFam" id="3.30.160.60:FF:002289">
    <property type="entry name" value="Zinc finger protein 813"/>
    <property type="match status" value="1"/>
</dbReference>
<dbReference type="FunFam" id="3.30.160.60:FF:000416">
    <property type="entry name" value="zinc finger protein 879 isoform X1"/>
    <property type="match status" value="3"/>
</dbReference>
<dbReference type="Gene3D" id="6.10.140.140">
    <property type="match status" value="1"/>
</dbReference>
<dbReference type="Gene3D" id="3.30.160.60">
    <property type="entry name" value="Classic Zinc Finger"/>
    <property type="match status" value="11"/>
</dbReference>
<dbReference type="InterPro" id="IPR001909">
    <property type="entry name" value="KRAB"/>
</dbReference>
<dbReference type="InterPro" id="IPR036051">
    <property type="entry name" value="KRAB_dom_sf"/>
</dbReference>
<dbReference type="InterPro" id="IPR050331">
    <property type="entry name" value="Zinc_finger"/>
</dbReference>
<dbReference type="InterPro" id="IPR036236">
    <property type="entry name" value="Znf_C2H2_sf"/>
</dbReference>
<dbReference type="InterPro" id="IPR013087">
    <property type="entry name" value="Znf_C2H2_type"/>
</dbReference>
<dbReference type="PANTHER" id="PTHR16515">
    <property type="entry name" value="PR DOMAIN ZINC FINGER PROTEIN"/>
    <property type="match status" value="1"/>
</dbReference>
<dbReference type="PANTHER" id="PTHR16515:SF57">
    <property type="entry name" value="ZINC FINGER PROTEIN 154-LIKE"/>
    <property type="match status" value="1"/>
</dbReference>
<dbReference type="Pfam" id="PF01352">
    <property type="entry name" value="KRAB"/>
    <property type="match status" value="1"/>
</dbReference>
<dbReference type="Pfam" id="PF00096">
    <property type="entry name" value="zf-C2H2"/>
    <property type="match status" value="7"/>
</dbReference>
<dbReference type="Pfam" id="PF13465">
    <property type="entry name" value="zf-H2C2_2"/>
    <property type="match status" value="1"/>
</dbReference>
<dbReference type="SMART" id="SM00349">
    <property type="entry name" value="KRAB"/>
    <property type="match status" value="1"/>
</dbReference>
<dbReference type="SMART" id="SM00355">
    <property type="entry name" value="ZnF_C2H2"/>
    <property type="match status" value="11"/>
</dbReference>
<dbReference type="SUPFAM" id="SSF57667">
    <property type="entry name" value="beta-beta-alpha zinc fingers"/>
    <property type="match status" value="6"/>
</dbReference>
<dbReference type="SUPFAM" id="SSF109640">
    <property type="entry name" value="KRAB domain (Kruppel-associated box)"/>
    <property type="match status" value="1"/>
</dbReference>
<dbReference type="PROSITE" id="PS50805">
    <property type="entry name" value="KRAB"/>
    <property type="match status" value="1"/>
</dbReference>
<dbReference type="PROSITE" id="PS00028">
    <property type="entry name" value="ZINC_FINGER_C2H2_1"/>
    <property type="match status" value="10"/>
</dbReference>
<dbReference type="PROSITE" id="PS50157">
    <property type="entry name" value="ZINC_FINGER_C2H2_2"/>
    <property type="match status" value="11"/>
</dbReference>
<reference key="1">
    <citation type="journal article" date="2005" name="Biochem. Genet.">
        <title>A novel zinc finger gene ZNF468 with two co-expressional splice variants, ZNF468.1 and ZNF468.2.</title>
        <authorList>
            <person name="Sun L."/>
            <person name="Gu S."/>
            <person name="Li N."/>
            <person name="Zheng D."/>
            <person name="Sun Y."/>
            <person name="Li D."/>
            <person name="Ji C."/>
            <person name="Ying K."/>
            <person name="Xie Y."/>
            <person name="Mao Y."/>
        </authorList>
    </citation>
    <scope>NUCLEOTIDE SEQUENCE [MRNA] (ISOFORMS 1 AND 2)</scope>
    <scope>ALTERNATIVE SPLICING</scope>
    <scope>TISSUE SPECIFICITY</scope>
    <source>
        <tissue>Fetal brain</tissue>
    </source>
</reference>
<reference key="2">
    <citation type="journal article" date="2007" name="BMC Genomics">
        <title>The full-ORF clone resource of the German cDNA consortium.</title>
        <authorList>
            <person name="Bechtel S."/>
            <person name="Rosenfelder H."/>
            <person name="Duda A."/>
            <person name="Schmidt C.P."/>
            <person name="Ernst U."/>
            <person name="Wellenreuther R."/>
            <person name="Mehrle A."/>
            <person name="Schuster C."/>
            <person name="Bahr A."/>
            <person name="Bloecker H."/>
            <person name="Heubner D."/>
            <person name="Hoerlein A."/>
            <person name="Michel G."/>
            <person name="Wedler H."/>
            <person name="Koehrer K."/>
            <person name="Ottenwaelder B."/>
            <person name="Poustka A."/>
            <person name="Wiemann S."/>
            <person name="Schupp I."/>
        </authorList>
    </citation>
    <scope>NUCLEOTIDE SEQUENCE [LARGE SCALE MRNA] (ISOFORM 1)</scope>
    <source>
        <tissue>Colon carcinoma</tissue>
        <tissue>Liver</tissue>
    </source>
</reference>
<reference key="3">
    <citation type="journal article" date="2004" name="Nature">
        <title>The DNA sequence and biology of human chromosome 19.</title>
        <authorList>
            <person name="Grimwood J."/>
            <person name="Gordon L.A."/>
            <person name="Olsen A.S."/>
            <person name="Terry A."/>
            <person name="Schmutz J."/>
            <person name="Lamerdin J.E."/>
            <person name="Hellsten U."/>
            <person name="Goodstein D."/>
            <person name="Couronne O."/>
            <person name="Tran-Gyamfi M."/>
            <person name="Aerts A."/>
            <person name="Altherr M."/>
            <person name="Ashworth L."/>
            <person name="Bajorek E."/>
            <person name="Black S."/>
            <person name="Branscomb E."/>
            <person name="Caenepeel S."/>
            <person name="Carrano A.V."/>
            <person name="Caoile C."/>
            <person name="Chan Y.M."/>
            <person name="Christensen M."/>
            <person name="Cleland C.A."/>
            <person name="Copeland A."/>
            <person name="Dalin E."/>
            <person name="Dehal P."/>
            <person name="Denys M."/>
            <person name="Detter J.C."/>
            <person name="Escobar J."/>
            <person name="Flowers D."/>
            <person name="Fotopulos D."/>
            <person name="Garcia C."/>
            <person name="Georgescu A.M."/>
            <person name="Glavina T."/>
            <person name="Gomez M."/>
            <person name="Gonzales E."/>
            <person name="Groza M."/>
            <person name="Hammon N."/>
            <person name="Hawkins T."/>
            <person name="Haydu L."/>
            <person name="Ho I."/>
            <person name="Huang W."/>
            <person name="Israni S."/>
            <person name="Jett J."/>
            <person name="Kadner K."/>
            <person name="Kimball H."/>
            <person name="Kobayashi A."/>
            <person name="Larionov V."/>
            <person name="Leem S.-H."/>
            <person name="Lopez F."/>
            <person name="Lou Y."/>
            <person name="Lowry S."/>
            <person name="Malfatti S."/>
            <person name="Martinez D."/>
            <person name="McCready P.M."/>
            <person name="Medina C."/>
            <person name="Morgan J."/>
            <person name="Nelson K."/>
            <person name="Nolan M."/>
            <person name="Ovcharenko I."/>
            <person name="Pitluck S."/>
            <person name="Pollard M."/>
            <person name="Popkie A.P."/>
            <person name="Predki P."/>
            <person name="Quan G."/>
            <person name="Ramirez L."/>
            <person name="Rash S."/>
            <person name="Retterer J."/>
            <person name="Rodriguez A."/>
            <person name="Rogers S."/>
            <person name="Salamov A."/>
            <person name="Salazar A."/>
            <person name="She X."/>
            <person name="Smith D."/>
            <person name="Slezak T."/>
            <person name="Solovyev V."/>
            <person name="Thayer N."/>
            <person name="Tice H."/>
            <person name="Tsai M."/>
            <person name="Ustaszewska A."/>
            <person name="Vo N."/>
            <person name="Wagner M."/>
            <person name="Wheeler J."/>
            <person name="Wu K."/>
            <person name="Xie G."/>
            <person name="Yang J."/>
            <person name="Dubchak I."/>
            <person name="Furey T.S."/>
            <person name="DeJong P."/>
            <person name="Dickson M."/>
            <person name="Gordon D."/>
            <person name="Eichler E.E."/>
            <person name="Pennacchio L.A."/>
            <person name="Richardson P."/>
            <person name="Stubbs L."/>
            <person name="Rokhsar D.S."/>
            <person name="Myers R.M."/>
            <person name="Rubin E.M."/>
            <person name="Lucas S.M."/>
        </authorList>
    </citation>
    <scope>NUCLEOTIDE SEQUENCE [LARGE SCALE GENOMIC DNA]</scope>
</reference>
<reference key="4">
    <citation type="submission" date="2005-07" db="EMBL/GenBank/DDBJ databases">
        <authorList>
            <person name="Mural R.J."/>
            <person name="Istrail S."/>
            <person name="Sutton G.G."/>
            <person name="Florea L."/>
            <person name="Halpern A.L."/>
            <person name="Mobarry C.M."/>
            <person name="Lippert R."/>
            <person name="Walenz B."/>
            <person name="Shatkay H."/>
            <person name="Dew I."/>
            <person name="Miller J.R."/>
            <person name="Flanigan M.J."/>
            <person name="Edwards N.J."/>
            <person name="Bolanos R."/>
            <person name="Fasulo D."/>
            <person name="Halldorsson B.V."/>
            <person name="Hannenhalli S."/>
            <person name="Turner R."/>
            <person name="Yooseph S."/>
            <person name="Lu F."/>
            <person name="Nusskern D.R."/>
            <person name="Shue B.C."/>
            <person name="Zheng X.H."/>
            <person name="Zhong F."/>
            <person name="Delcher A.L."/>
            <person name="Huson D.H."/>
            <person name="Kravitz S.A."/>
            <person name="Mouchard L."/>
            <person name="Reinert K."/>
            <person name="Remington K.A."/>
            <person name="Clark A.G."/>
            <person name="Waterman M.S."/>
            <person name="Eichler E.E."/>
            <person name="Adams M.D."/>
            <person name="Hunkapiller M.W."/>
            <person name="Myers E.W."/>
            <person name="Venter J.C."/>
        </authorList>
    </citation>
    <scope>NUCLEOTIDE SEQUENCE [LARGE SCALE GENOMIC DNA]</scope>
</reference>
<protein>
    <recommendedName>
        <fullName>Zinc finger protein 468</fullName>
    </recommendedName>
</protein>
<accession>Q5VIY5</accession>
<accession>A8MV20</accession>
<accession>Q5CZB8</accession>
<accession>Q5VIY4</accession>
<accession>Q68DI7</accession>
<organism>
    <name type="scientific">Homo sapiens</name>
    <name type="common">Human</name>
    <dbReference type="NCBI Taxonomy" id="9606"/>
    <lineage>
        <taxon>Eukaryota</taxon>
        <taxon>Metazoa</taxon>
        <taxon>Chordata</taxon>
        <taxon>Craniata</taxon>
        <taxon>Vertebrata</taxon>
        <taxon>Euteleostomi</taxon>
        <taxon>Mammalia</taxon>
        <taxon>Eutheria</taxon>
        <taxon>Euarchontoglires</taxon>
        <taxon>Primates</taxon>
        <taxon>Haplorrhini</taxon>
        <taxon>Catarrhini</taxon>
        <taxon>Hominidae</taxon>
        <taxon>Homo</taxon>
    </lineage>
</organism>
<proteinExistence type="evidence at protein level"/>
<evidence type="ECO:0000255" key="1">
    <source>
        <dbReference type="PROSITE-ProRule" id="PRU00042"/>
    </source>
</evidence>
<evidence type="ECO:0000255" key="2">
    <source>
        <dbReference type="PROSITE-ProRule" id="PRU00119"/>
    </source>
</evidence>
<evidence type="ECO:0000269" key="3">
    <source>
    </source>
</evidence>
<evidence type="ECO:0000303" key="4">
    <source>
    </source>
</evidence>
<evidence type="ECO:0000305" key="5"/>
<sequence>MALPQGLLTFRDVAIEFSQEEWKCLDPAQRTLYRDVMLENYRNLVSLDISSKCMLKTLSSTGQGNTEVIHTGTLHRQASHHIGEFCFHEIEKDIHGFEFQWKEDETNGHAAPMTEIKELAGSTGQHDQRHAGNKRIKDQLGSSFHLHLPEPHIFQSEGKIGNQVEKSINNASSVSTSQRICCRPKTHISNKYGNNSLHSSLLTQKWEVHMREKSFECIQSFKSFNCSSLLKKHQIIHLEEKQCKCDVCGKVFNQKRYLACHRRCHTGEKPYKCNECGKTFGHNSSLFIHKALHTGEKPYECEECDKVFSRKSHLERHKRIHTGEKPYKCKVCDEAFAYNSYLAKHTILHTGEKPYTCNECGKVFNRLSTLARHHRLHTGEKPYKCEECDKVFSRKSHLERHRRIHSGEKPYKCEECCKVFSRKSNLERHRRIHTGEKPYKCKVCDKAFQRDSHLAQHQRVHTGEKPYKCNECGKTFGQTSSLIIHRRLHTGEKPYKCNECGKTFSQMSSLVYHHRLHSGEKP</sequence>
<gene>
    <name type="primary">ZNF468</name>
</gene>
<keyword id="KW-0025">Alternative splicing</keyword>
<keyword id="KW-0238">DNA-binding</keyword>
<keyword id="KW-0479">Metal-binding</keyword>
<keyword id="KW-0539">Nucleus</keyword>
<keyword id="KW-1267">Proteomics identification</keyword>
<keyword id="KW-1185">Reference proteome</keyword>
<keyword id="KW-0677">Repeat</keyword>
<keyword id="KW-0804">Transcription</keyword>
<keyword id="KW-0805">Transcription regulation</keyword>
<keyword id="KW-0862">Zinc</keyword>
<keyword id="KW-0863">Zinc-finger</keyword>
<comment type="function">
    <text>May be involved in transcriptional regulation.</text>
</comment>
<comment type="subcellular location">
    <subcellularLocation>
        <location evidence="5">Nucleus</location>
    </subcellularLocation>
</comment>
<comment type="alternative products">
    <event type="alternative splicing"/>
    <isoform>
        <id>Q5VIY5-1</id>
        <name>1</name>
        <name>ZNF468.1</name>
        <sequence type="displayed"/>
    </isoform>
    <isoform>
        <id>Q5VIY5-2</id>
        <name>2</name>
        <name>ZNF468.2</name>
        <sequence type="described" ref="VSP_023659"/>
    </isoform>
</comment>
<comment type="tissue specificity">
    <text evidence="3">Isoform 1 and isoform 2 are highly expressed in placenta, pancreas, and small intestine. Lower expression in colon, ovary, testis, prostate, thymus, spleen, kidney, and liver. No expression detected in heart and brain.</text>
</comment>
<comment type="similarity">
    <text evidence="5">Belongs to the krueppel C2H2-type zinc-finger protein family.</text>
</comment>
<feature type="chain" id="PRO_0000280412" description="Zinc finger protein 468">
    <location>
        <begin position="1"/>
        <end position="522"/>
    </location>
</feature>
<feature type="domain" description="KRAB" evidence="2">
    <location>
        <begin position="8"/>
        <end position="80"/>
    </location>
</feature>
<feature type="zinc finger region" description="C2H2-type 1; degenerate" evidence="1">
    <location>
        <begin position="215"/>
        <end position="237"/>
    </location>
</feature>
<feature type="zinc finger region" description="C2H2-type 2" evidence="1">
    <location>
        <begin position="243"/>
        <end position="265"/>
    </location>
</feature>
<feature type="zinc finger region" description="C2H2-type 3" evidence="1">
    <location>
        <begin position="271"/>
        <end position="293"/>
    </location>
</feature>
<feature type="zinc finger region" description="C2H2-type 4" evidence="1">
    <location>
        <begin position="299"/>
        <end position="321"/>
    </location>
</feature>
<feature type="zinc finger region" description="C2H2-type 5" evidence="1">
    <location>
        <begin position="327"/>
        <end position="349"/>
    </location>
</feature>
<feature type="zinc finger region" description="C2H2-type 6" evidence="1">
    <location>
        <begin position="355"/>
        <end position="377"/>
    </location>
</feature>
<feature type="zinc finger region" description="C2H2-type 7" evidence="1">
    <location>
        <begin position="383"/>
        <end position="405"/>
    </location>
</feature>
<feature type="zinc finger region" description="C2H2-type 8" evidence="1">
    <location>
        <begin position="411"/>
        <end position="433"/>
    </location>
</feature>
<feature type="zinc finger region" description="C2H2-type 9" evidence="1">
    <location>
        <begin position="439"/>
        <end position="461"/>
    </location>
</feature>
<feature type="zinc finger region" description="C2H2-type 10" evidence="1">
    <location>
        <begin position="467"/>
        <end position="489"/>
    </location>
</feature>
<feature type="zinc finger region" description="C2H2-type 11" evidence="1">
    <location>
        <begin position="495"/>
        <end position="517"/>
    </location>
</feature>
<feature type="splice variant" id="VSP_023659" description="In isoform 2." evidence="4">
    <location>
        <begin position="1"/>
        <end position="53"/>
    </location>
</feature>
<feature type="sequence variant" id="VAR_031141" description="In dbSNP:rs12462929.">
    <original>H</original>
    <variation>R</variation>
    <location>
        <position position="374"/>
    </location>
</feature>
<feature type="sequence variant" id="VAR_031142" description="In dbSNP:rs10419826.">
    <original>G</original>
    <variation>R</variation>
    <location>
        <position position="477"/>
    </location>
</feature>
<feature type="sequence conflict" description="In Ref. 2; CAH18233." evidence="5" ref="2">
    <original>N</original>
    <variation>G</variation>
    <location>
        <position position="253"/>
    </location>
</feature>
<feature type="sequence conflict" description="In Ref. 2; CAI56747." evidence="5" ref="2">
    <original>L</original>
    <variation>P</variation>
    <location>
        <position position="482"/>
    </location>
</feature>
<name>ZN468_HUMAN</name>